<evidence type="ECO:0000255" key="1">
    <source>
        <dbReference type="HAMAP-Rule" id="MF_01218"/>
    </source>
</evidence>
<feature type="chain" id="PRO_1000053681" description="Uracil phosphoribosyltransferase">
    <location>
        <begin position="1"/>
        <end position="208"/>
    </location>
</feature>
<feature type="binding site" evidence="1">
    <location>
        <position position="78"/>
    </location>
    <ligand>
        <name>5-phospho-alpha-D-ribose 1-diphosphate</name>
        <dbReference type="ChEBI" id="CHEBI:58017"/>
    </ligand>
</feature>
<feature type="binding site" evidence="1">
    <location>
        <position position="103"/>
    </location>
    <ligand>
        <name>5-phospho-alpha-D-ribose 1-diphosphate</name>
        <dbReference type="ChEBI" id="CHEBI:58017"/>
    </ligand>
</feature>
<feature type="binding site" evidence="1">
    <location>
        <begin position="130"/>
        <end position="138"/>
    </location>
    <ligand>
        <name>5-phospho-alpha-D-ribose 1-diphosphate</name>
        <dbReference type="ChEBI" id="CHEBI:58017"/>
    </ligand>
</feature>
<feature type="binding site" evidence="1">
    <location>
        <position position="193"/>
    </location>
    <ligand>
        <name>uracil</name>
        <dbReference type="ChEBI" id="CHEBI:17568"/>
    </ligand>
</feature>
<feature type="binding site" evidence="1">
    <location>
        <begin position="198"/>
        <end position="200"/>
    </location>
    <ligand>
        <name>uracil</name>
        <dbReference type="ChEBI" id="CHEBI:17568"/>
    </ligand>
</feature>
<feature type="binding site" evidence="1">
    <location>
        <position position="199"/>
    </location>
    <ligand>
        <name>5-phospho-alpha-D-ribose 1-diphosphate</name>
        <dbReference type="ChEBI" id="CHEBI:58017"/>
    </ligand>
</feature>
<proteinExistence type="inferred from homology"/>
<comment type="function">
    <text evidence="1">Catalyzes the conversion of uracil and 5-phospho-alpha-D-ribose 1-diphosphate (PRPP) to UMP and diphosphate.</text>
</comment>
<comment type="catalytic activity">
    <reaction evidence="1">
        <text>UMP + diphosphate = 5-phospho-alpha-D-ribose 1-diphosphate + uracil</text>
        <dbReference type="Rhea" id="RHEA:13017"/>
        <dbReference type="ChEBI" id="CHEBI:17568"/>
        <dbReference type="ChEBI" id="CHEBI:33019"/>
        <dbReference type="ChEBI" id="CHEBI:57865"/>
        <dbReference type="ChEBI" id="CHEBI:58017"/>
        <dbReference type="EC" id="2.4.2.9"/>
    </reaction>
</comment>
<comment type="cofactor">
    <cofactor evidence="1">
        <name>Mg(2+)</name>
        <dbReference type="ChEBI" id="CHEBI:18420"/>
    </cofactor>
    <text evidence="1">Binds 1 Mg(2+) ion per subunit. The magnesium is bound as Mg-PRPP.</text>
</comment>
<comment type="activity regulation">
    <text evidence="1">Allosterically activated by GTP.</text>
</comment>
<comment type="pathway">
    <text evidence="1">Pyrimidine metabolism; UMP biosynthesis via salvage pathway; UMP from uracil: step 1/1.</text>
</comment>
<comment type="similarity">
    <text evidence="1">Belongs to the UPRTase family.</text>
</comment>
<accession>Q576P9</accession>
<sequence>MGVTVVSHPLVKHKLTIMRKKETSTASFRRLLKEISLLLCYEVTRNLELTTMSIETPLMPMEAPVLEGKKLVFASILRAGNGLLEGMLDLVPAARVAHIGLYRDHDTLQPIEYYFKAPEDIVNRLVIVVDPMLATANSAIAAIDKLKERGATNIRFLCLLAAPEGIERFTKAHPDVEVFTASIDECLDEKGYIVPGLGDAGDRMYGTK</sequence>
<organism>
    <name type="scientific">Brucella abortus biovar 1 (strain 9-941)</name>
    <dbReference type="NCBI Taxonomy" id="262698"/>
    <lineage>
        <taxon>Bacteria</taxon>
        <taxon>Pseudomonadati</taxon>
        <taxon>Pseudomonadota</taxon>
        <taxon>Alphaproteobacteria</taxon>
        <taxon>Hyphomicrobiales</taxon>
        <taxon>Brucellaceae</taxon>
        <taxon>Brucella/Ochrobactrum group</taxon>
        <taxon>Brucella</taxon>
    </lineage>
</organism>
<name>UPP_BRUAB</name>
<keyword id="KW-0021">Allosteric enzyme</keyword>
<keyword id="KW-0328">Glycosyltransferase</keyword>
<keyword id="KW-0342">GTP-binding</keyword>
<keyword id="KW-0460">Magnesium</keyword>
<keyword id="KW-0547">Nucleotide-binding</keyword>
<keyword id="KW-0808">Transferase</keyword>
<protein>
    <recommendedName>
        <fullName evidence="1">Uracil phosphoribosyltransferase</fullName>
        <ecNumber evidence="1">2.4.2.9</ecNumber>
    </recommendedName>
    <alternativeName>
        <fullName evidence="1">UMP pyrophosphorylase</fullName>
    </alternativeName>
    <alternativeName>
        <fullName evidence="1">UPRTase</fullName>
    </alternativeName>
</protein>
<dbReference type="EC" id="2.4.2.9" evidence="1"/>
<dbReference type="EMBL" id="AE017224">
    <property type="protein sequence ID" value="AAX76385.1"/>
    <property type="molecule type" value="Genomic_DNA"/>
</dbReference>
<dbReference type="RefSeq" id="WP_002967385.1">
    <property type="nucleotide sequence ID" value="NC_006933.1"/>
</dbReference>
<dbReference type="SMR" id="Q576P9"/>
<dbReference type="EnsemblBacteria" id="AAX76385">
    <property type="protein sequence ID" value="AAX76385"/>
    <property type="gene ID" value="BruAb2_1007"/>
</dbReference>
<dbReference type="GeneID" id="93015154"/>
<dbReference type="KEGG" id="bmb:BruAb2_1007"/>
<dbReference type="HOGENOM" id="CLU_067096_2_2_5"/>
<dbReference type="UniPathway" id="UPA00574">
    <property type="reaction ID" value="UER00636"/>
</dbReference>
<dbReference type="Proteomes" id="UP000000540">
    <property type="component" value="Chromosome II"/>
</dbReference>
<dbReference type="GO" id="GO:0005525">
    <property type="term" value="F:GTP binding"/>
    <property type="evidence" value="ECO:0007669"/>
    <property type="project" value="UniProtKB-KW"/>
</dbReference>
<dbReference type="GO" id="GO:0000287">
    <property type="term" value="F:magnesium ion binding"/>
    <property type="evidence" value="ECO:0007669"/>
    <property type="project" value="UniProtKB-UniRule"/>
</dbReference>
<dbReference type="GO" id="GO:0004845">
    <property type="term" value="F:uracil phosphoribosyltransferase activity"/>
    <property type="evidence" value="ECO:0007669"/>
    <property type="project" value="UniProtKB-UniRule"/>
</dbReference>
<dbReference type="GO" id="GO:0044206">
    <property type="term" value="P:UMP salvage"/>
    <property type="evidence" value="ECO:0007669"/>
    <property type="project" value="UniProtKB-UniRule"/>
</dbReference>
<dbReference type="GO" id="GO:0006223">
    <property type="term" value="P:uracil salvage"/>
    <property type="evidence" value="ECO:0007669"/>
    <property type="project" value="InterPro"/>
</dbReference>
<dbReference type="CDD" id="cd06223">
    <property type="entry name" value="PRTases_typeI"/>
    <property type="match status" value="1"/>
</dbReference>
<dbReference type="FunFam" id="3.40.50.2020:FF:000003">
    <property type="entry name" value="Uracil phosphoribosyltransferase"/>
    <property type="match status" value="1"/>
</dbReference>
<dbReference type="Gene3D" id="3.40.50.2020">
    <property type="match status" value="1"/>
</dbReference>
<dbReference type="HAMAP" id="MF_01218_B">
    <property type="entry name" value="Upp_B"/>
    <property type="match status" value="1"/>
</dbReference>
<dbReference type="InterPro" id="IPR000836">
    <property type="entry name" value="PRibTrfase_dom"/>
</dbReference>
<dbReference type="InterPro" id="IPR029057">
    <property type="entry name" value="PRTase-like"/>
</dbReference>
<dbReference type="InterPro" id="IPR034332">
    <property type="entry name" value="Upp_B"/>
</dbReference>
<dbReference type="InterPro" id="IPR050054">
    <property type="entry name" value="UPRTase/APRTase"/>
</dbReference>
<dbReference type="InterPro" id="IPR005765">
    <property type="entry name" value="Ura_phspho_trans"/>
</dbReference>
<dbReference type="NCBIfam" id="NF001097">
    <property type="entry name" value="PRK00129.1"/>
    <property type="match status" value="1"/>
</dbReference>
<dbReference type="NCBIfam" id="TIGR01091">
    <property type="entry name" value="upp"/>
    <property type="match status" value="1"/>
</dbReference>
<dbReference type="PANTHER" id="PTHR32315">
    <property type="entry name" value="ADENINE PHOSPHORIBOSYLTRANSFERASE"/>
    <property type="match status" value="1"/>
</dbReference>
<dbReference type="PANTHER" id="PTHR32315:SF4">
    <property type="entry name" value="URACIL PHOSPHORIBOSYLTRANSFERASE, CHLOROPLASTIC"/>
    <property type="match status" value="1"/>
</dbReference>
<dbReference type="Pfam" id="PF14681">
    <property type="entry name" value="UPRTase"/>
    <property type="match status" value="1"/>
</dbReference>
<dbReference type="SUPFAM" id="SSF53271">
    <property type="entry name" value="PRTase-like"/>
    <property type="match status" value="1"/>
</dbReference>
<gene>
    <name evidence="1" type="primary">upp</name>
    <name type="ordered locus">BruAb2_1007</name>
</gene>
<reference key="1">
    <citation type="journal article" date="2005" name="J. Bacteriol.">
        <title>Completion of the genome sequence of Brucella abortus and comparison to the highly similar genomes of Brucella melitensis and Brucella suis.</title>
        <authorList>
            <person name="Halling S.M."/>
            <person name="Peterson-Burch B.D."/>
            <person name="Bricker B.J."/>
            <person name="Zuerner R.L."/>
            <person name="Qing Z."/>
            <person name="Li L.-L."/>
            <person name="Kapur V."/>
            <person name="Alt D.P."/>
            <person name="Olsen S.C."/>
        </authorList>
    </citation>
    <scope>NUCLEOTIDE SEQUENCE [LARGE SCALE GENOMIC DNA]</scope>
    <source>
        <strain>9-941</strain>
    </source>
</reference>